<dbReference type="EC" id="6.3.2.13" evidence="1"/>
<dbReference type="EMBL" id="CP000095">
    <property type="protein sequence ID" value="AAZ59235.1"/>
    <property type="molecule type" value="Genomic_DNA"/>
</dbReference>
<dbReference type="RefSeq" id="WP_011294380.1">
    <property type="nucleotide sequence ID" value="NC_007335.2"/>
</dbReference>
<dbReference type="SMR" id="Q46LZ6"/>
<dbReference type="STRING" id="59920.PMN2A_1747"/>
<dbReference type="KEGG" id="pmn:PMN2A_1747"/>
<dbReference type="HOGENOM" id="CLU_022291_4_1_3"/>
<dbReference type="OrthoDB" id="9800958at2"/>
<dbReference type="PhylomeDB" id="Q46LZ6"/>
<dbReference type="UniPathway" id="UPA00219"/>
<dbReference type="Proteomes" id="UP000002535">
    <property type="component" value="Chromosome"/>
</dbReference>
<dbReference type="GO" id="GO:0005737">
    <property type="term" value="C:cytoplasm"/>
    <property type="evidence" value="ECO:0007669"/>
    <property type="project" value="UniProtKB-SubCell"/>
</dbReference>
<dbReference type="GO" id="GO:0005524">
    <property type="term" value="F:ATP binding"/>
    <property type="evidence" value="ECO:0007669"/>
    <property type="project" value="UniProtKB-UniRule"/>
</dbReference>
<dbReference type="GO" id="GO:0000287">
    <property type="term" value="F:magnesium ion binding"/>
    <property type="evidence" value="ECO:0007669"/>
    <property type="project" value="UniProtKB-UniRule"/>
</dbReference>
<dbReference type="GO" id="GO:0008765">
    <property type="term" value="F:UDP-N-acetylmuramoylalanyl-D-glutamate-2,6-diaminopimelate ligase activity"/>
    <property type="evidence" value="ECO:0007669"/>
    <property type="project" value="UniProtKB-UniRule"/>
</dbReference>
<dbReference type="GO" id="GO:0051301">
    <property type="term" value="P:cell division"/>
    <property type="evidence" value="ECO:0007669"/>
    <property type="project" value="UniProtKB-KW"/>
</dbReference>
<dbReference type="GO" id="GO:0071555">
    <property type="term" value="P:cell wall organization"/>
    <property type="evidence" value="ECO:0007669"/>
    <property type="project" value="UniProtKB-KW"/>
</dbReference>
<dbReference type="GO" id="GO:0009252">
    <property type="term" value="P:peptidoglycan biosynthetic process"/>
    <property type="evidence" value="ECO:0007669"/>
    <property type="project" value="UniProtKB-UniRule"/>
</dbReference>
<dbReference type="GO" id="GO:0008360">
    <property type="term" value="P:regulation of cell shape"/>
    <property type="evidence" value="ECO:0007669"/>
    <property type="project" value="UniProtKB-KW"/>
</dbReference>
<dbReference type="FunFam" id="3.90.190.20:FF:000006">
    <property type="entry name" value="UDP-N-acetylmuramoyl-L-alanyl-D-glutamate--2,6-diaminopimelate ligase"/>
    <property type="match status" value="1"/>
</dbReference>
<dbReference type="Gene3D" id="3.90.190.20">
    <property type="entry name" value="Mur ligase, C-terminal domain"/>
    <property type="match status" value="1"/>
</dbReference>
<dbReference type="Gene3D" id="3.40.1190.10">
    <property type="entry name" value="Mur-like, catalytic domain"/>
    <property type="match status" value="1"/>
</dbReference>
<dbReference type="Gene3D" id="3.40.1390.10">
    <property type="entry name" value="MurE/MurF, N-terminal domain"/>
    <property type="match status" value="1"/>
</dbReference>
<dbReference type="HAMAP" id="MF_00208">
    <property type="entry name" value="MurE"/>
    <property type="match status" value="1"/>
</dbReference>
<dbReference type="InterPro" id="IPR036565">
    <property type="entry name" value="Mur-like_cat_sf"/>
</dbReference>
<dbReference type="InterPro" id="IPR004101">
    <property type="entry name" value="Mur_ligase_C"/>
</dbReference>
<dbReference type="InterPro" id="IPR036615">
    <property type="entry name" value="Mur_ligase_C_dom_sf"/>
</dbReference>
<dbReference type="InterPro" id="IPR013221">
    <property type="entry name" value="Mur_ligase_cen"/>
</dbReference>
<dbReference type="InterPro" id="IPR000713">
    <property type="entry name" value="Mur_ligase_N"/>
</dbReference>
<dbReference type="InterPro" id="IPR035911">
    <property type="entry name" value="MurE/MurF_N"/>
</dbReference>
<dbReference type="InterPro" id="IPR005761">
    <property type="entry name" value="UDP-N-AcMur-Glu-dNH2Pim_ligase"/>
</dbReference>
<dbReference type="NCBIfam" id="TIGR01085">
    <property type="entry name" value="murE"/>
    <property type="match status" value="1"/>
</dbReference>
<dbReference type="NCBIfam" id="NF001124">
    <property type="entry name" value="PRK00139.1-2"/>
    <property type="match status" value="1"/>
</dbReference>
<dbReference type="NCBIfam" id="NF001126">
    <property type="entry name" value="PRK00139.1-4"/>
    <property type="match status" value="1"/>
</dbReference>
<dbReference type="PANTHER" id="PTHR23135">
    <property type="entry name" value="MUR LIGASE FAMILY MEMBER"/>
    <property type="match status" value="1"/>
</dbReference>
<dbReference type="PANTHER" id="PTHR23135:SF4">
    <property type="entry name" value="UDP-N-ACETYLMURAMOYL-L-ALANYL-D-GLUTAMATE--2,6-DIAMINOPIMELATE LIGASE MURE HOMOLOG, CHLOROPLASTIC"/>
    <property type="match status" value="1"/>
</dbReference>
<dbReference type="Pfam" id="PF01225">
    <property type="entry name" value="Mur_ligase"/>
    <property type="match status" value="1"/>
</dbReference>
<dbReference type="Pfam" id="PF02875">
    <property type="entry name" value="Mur_ligase_C"/>
    <property type="match status" value="1"/>
</dbReference>
<dbReference type="Pfam" id="PF08245">
    <property type="entry name" value="Mur_ligase_M"/>
    <property type="match status" value="1"/>
</dbReference>
<dbReference type="SUPFAM" id="SSF53623">
    <property type="entry name" value="MurD-like peptide ligases, catalytic domain"/>
    <property type="match status" value="1"/>
</dbReference>
<dbReference type="SUPFAM" id="SSF53244">
    <property type="entry name" value="MurD-like peptide ligases, peptide-binding domain"/>
    <property type="match status" value="1"/>
</dbReference>
<dbReference type="SUPFAM" id="SSF63418">
    <property type="entry name" value="MurE/MurF N-terminal domain"/>
    <property type="match status" value="1"/>
</dbReference>
<feature type="chain" id="PRO_1000012375" description="UDP-N-acetylmuramoyl-L-alanyl-D-glutamate--2,6-diaminopimelate ligase">
    <location>
        <begin position="1"/>
        <end position="509"/>
    </location>
</feature>
<feature type="short sequence motif" description="Meso-diaminopimelate recognition motif">
    <location>
        <begin position="425"/>
        <end position="428"/>
    </location>
</feature>
<feature type="binding site" evidence="1">
    <location>
        <position position="32"/>
    </location>
    <ligand>
        <name>UDP-N-acetyl-alpha-D-muramoyl-L-alanyl-D-glutamate</name>
        <dbReference type="ChEBI" id="CHEBI:83900"/>
    </ligand>
</feature>
<feature type="binding site" evidence="1">
    <location>
        <begin position="117"/>
        <end position="123"/>
    </location>
    <ligand>
        <name>ATP</name>
        <dbReference type="ChEBI" id="CHEBI:30616"/>
    </ligand>
</feature>
<feature type="binding site" evidence="1">
    <location>
        <begin position="159"/>
        <end position="160"/>
    </location>
    <ligand>
        <name>UDP-N-acetyl-alpha-D-muramoyl-L-alanyl-D-glutamate</name>
        <dbReference type="ChEBI" id="CHEBI:83900"/>
    </ligand>
</feature>
<feature type="binding site" evidence="1">
    <location>
        <position position="186"/>
    </location>
    <ligand>
        <name>UDP-N-acetyl-alpha-D-muramoyl-L-alanyl-D-glutamate</name>
        <dbReference type="ChEBI" id="CHEBI:83900"/>
    </ligand>
</feature>
<feature type="binding site" evidence="1">
    <location>
        <position position="192"/>
    </location>
    <ligand>
        <name>UDP-N-acetyl-alpha-D-muramoyl-L-alanyl-D-glutamate</name>
        <dbReference type="ChEBI" id="CHEBI:83900"/>
    </ligand>
</feature>
<feature type="binding site" evidence="1">
    <location>
        <position position="194"/>
    </location>
    <ligand>
        <name>UDP-N-acetyl-alpha-D-muramoyl-L-alanyl-D-glutamate</name>
        <dbReference type="ChEBI" id="CHEBI:83900"/>
    </ligand>
</feature>
<feature type="binding site" evidence="1">
    <location>
        <position position="401"/>
    </location>
    <ligand>
        <name>meso-2,6-diaminopimelate</name>
        <dbReference type="ChEBI" id="CHEBI:57791"/>
    </ligand>
</feature>
<feature type="binding site" evidence="1">
    <location>
        <begin position="425"/>
        <end position="428"/>
    </location>
    <ligand>
        <name>meso-2,6-diaminopimelate</name>
        <dbReference type="ChEBI" id="CHEBI:57791"/>
    </ligand>
</feature>
<feature type="binding site" evidence="1">
    <location>
        <position position="476"/>
    </location>
    <ligand>
        <name>meso-2,6-diaminopimelate</name>
        <dbReference type="ChEBI" id="CHEBI:57791"/>
    </ligand>
</feature>
<feature type="binding site" evidence="1">
    <location>
        <position position="480"/>
    </location>
    <ligand>
        <name>meso-2,6-diaminopimelate</name>
        <dbReference type="ChEBI" id="CHEBI:57791"/>
    </ligand>
</feature>
<feature type="modified residue" description="N6-carboxylysine" evidence="1">
    <location>
        <position position="226"/>
    </location>
</feature>
<protein>
    <recommendedName>
        <fullName evidence="1">UDP-N-acetylmuramoyl-L-alanyl-D-glutamate--2,6-diaminopimelate ligase</fullName>
        <ecNumber evidence="1">6.3.2.13</ecNumber>
    </recommendedName>
    <alternativeName>
        <fullName evidence="1">Meso-A2pm-adding enzyme</fullName>
    </alternativeName>
    <alternativeName>
        <fullName evidence="1">Meso-diaminopimelate-adding enzyme</fullName>
    </alternativeName>
    <alternativeName>
        <fullName evidence="1">UDP-MurNAc-L-Ala-D-Glu:meso-diaminopimelate ligase</fullName>
    </alternativeName>
    <alternativeName>
        <fullName evidence="1">UDP-MurNAc-tripeptide synthetase</fullName>
    </alternativeName>
    <alternativeName>
        <fullName evidence="1">UDP-N-acetylmuramyl-tripeptide synthetase</fullName>
    </alternativeName>
</protein>
<accession>Q46LZ6</accession>
<reference key="1">
    <citation type="journal article" date="2007" name="PLoS Genet.">
        <title>Patterns and implications of gene gain and loss in the evolution of Prochlorococcus.</title>
        <authorList>
            <person name="Kettler G.C."/>
            <person name="Martiny A.C."/>
            <person name="Huang K."/>
            <person name="Zucker J."/>
            <person name="Coleman M.L."/>
            <person name="Rodrigue S."/>
            <person name="Chen F."/>
            <person name="Lapidus A."/>
            <person name="Ferriera S."/>
            <person name="Johnson J."/>
            <person name="Steglich C."/>
            <person name="Church G.M."/>
            <person name="Richardson P."/>
            <person name="Chisholm S.W."/>
        </authorList>
    </citation>
    <scope>NUCLEOTIDE SEQUENCE [LARGE SCALE GENOMIC DNA]</scope>
    <source>
        <strain>NATL2A</strain>
    </source>
</reference>
<gene>
    <name evidence="1" type="primary">murE</name>
    <name type="ordered locus">PMN2A_1747</name>
</gene>
<keyword id="KW-0067">ATP-binding</keyword>
<keyword id="KW-0131">Cell cycle</keyword>
<keyword id="KW-0132">Cell division</keyword>
<keyword id="KW-0133">Cell shape</keyword>
<keyword id="KW-0961">Cell wall biogenesis/degradation</keyword>
<keyword id="KW-0963">Cytoplasm</keyword>
<keyword id="KW-0436">Ligase</keyword>
<keyword id="KW-0460">Magnesium</keyword>
<keyword id="KW-0547">Nucleotide-binding</keyword>
<keyword id="KW-0573">Peptidoglycan synthesis</keyword>
<keyword id="KW-1185">Reference proteome</keyword>
<comment type="function">
    <text evidence="1">Catalyzes the addition of meso-diaminopimelic acid to the nucleotide precursor UDP-N-acetylmuramoyl-L-alanyl-D-glutamate (UMAG) in the biosynthesis of bacterial cell-wall peptidoglycan.</text>
</comment>
<comment type="catalytic activity">
    <reaction evidence="1">
        <text>UDP-N-acetyl-alpha-D-muramoyl-L-alanyl-D-glutamate + meso-2,6-diaminopimelate + ATP = UDP-N-acetyl-alpha-D-muramoyl-L-alanyl-gamma-D-glutamyl-meso-2,6-diaminopimelate + ADP + phosphate + H(+)</text>
        <dbReference type="Rhea" id="RHEA:23676"/>
        <dbReference type="ChEBI" id="CHEBI:15378"/>
        <dbReference type="ChEBI" id="CHEBI:30616"/>
        <dbReference type="ChEBI" id="CHEBI:43474"/>
        <dbReference type="ChEBI" id="CHEBI:57791"/>
        <dbReference type="ChEBI" id="CHEBI:83900"/>
        <dbReference type="ChEBI" id="CHEBI:83905"/>
        <dbReference type="ChEBI" id="CHEBI:456216"/>
        <dbReference type="EC" id="6.3.2.13"/>
    </reaction>
</comment>
<comment type="cofactor">
    <cofactor evidence="1">
        <name>Mg(2+)</name>
        <dbReference type="ChEBI" id="CHEBI:18420"/>
    </cofactor>
</comment>
<comment type="pathway">
    <text evidence="1">Cell wall biogenesis; peptidoglycan biosynthesis.</text>
</comment>
<comment type="subcellular location">
    <subcellularLocation>
        <location evidence="1">Cytoplasm</location>
    </subcellularLocation>
</comment>
<comment type="PTM">
    <text evidence="1">Carboxylation is probably crucial for Mg(2+) binding and, consequently, for the gamma-phosphate positioning of ATP.</text>
</comment>
<comment type="similarity">
    <text evidence="1">Belongs to the MurCDEF family. MurE subfamily.</text>
</comment>
<evidence type="ECO:0000255" key="1">
    <source>
        <dbReference type="HAMAP-Rule" id="MF_00208"/>
    </source>
</evidence>
<sequence>MSRYLHTLLKAIDLQVRSGLANPEIKNLSTDSREIEKGDLFLGLDGEKVDGGNFWAKAIERGACAAIISKKASLLNPPTNEDPVVILPEPVSLFMGKLAADFWGKPSSEICLIGITGTNGKTTTSFLIEFLTTSLGHPSALFGTLINRWPNHEETSKYTTTFAVPLQAKLRKAVQAGVEYGAMEVSSHALSQNRVAGCDFNGAVFTNLSRDHLDYHDSMESYFEAKASLFRSHLIEDGGPRSVINIDDKWGAKLAKELNKKCWTCSLKENSQTREKADLYISNLQIMQDGYKGKLHTPFGVENFISPLIGEFNLMNMLQAVGILVQRGLPLNDLLAALNKFPGVPGRMQLINMDGFKVKEGYPLVIVDYAHTPDGLQNALIASRSLTKRRLICVFGCGGDRDKGKRSKMGEVAAKFADYIVVTSDNPRQEDPIEIIKDIGKGITIDSEISVEPERSIAIQLAIAKAKKNDVVLIAGKGHEDYQILKDQTIYFDDREQARKALSLKTDFI</sequence>
<name>MURE_PROMT</name>
<organism>
    <name type="scientific">Prochlorococcus marinus (strain NATL2A)</name>
    <dbReference type="NCBI Taxonomy" id="59920"/>
    <lineage>
        <taxon>Bacteria</taxon>
        <taxon>Bacillati</taxon>
        <taxon>Cyanobacteriota</taxon>
        <taxon>Cyanophyceae</taxon>
        <taxon>Synechococcales</taxon>
        <taxon>Prochlorococcaceae</taxon>
        <taxon>Prochlorococcus</taxon>
    </lineage>
</organism>
<proteinExistence type="inferred from homology"/>